<organism>
    <name type="scientific">Actinobacillus pleuropneumoniae serotype 7 (strain AP76)</name>
    <dbReference type="NCBI Taxonomy" id="537457"/>
    <lineage>
        <taxon>Bacteria</taxon>
        <taxon>Pseudomonadati</taxon>
        <taxon>Pseudomonadota</taxon>
        <taxon>Gammaproteobacteria</taxon>
        <taxon>Pasteurellales</taxon>
        <taxon>Pasteurellaceae</taxon>
        <taxon>Actinobacillus</taxon>
    </lineage>
</organism>
<evidence type="ECO:0000255" key="1">
    <source>
        <dbReference type="HAMAP-Rule" id="MF_00225"/>
    </source>
</evidence>
<accession>B3H1B5</accession>
<protein>
    <recommendedName>
        <fullName evidence="1">Dihydroorotate dehydrogenase (quinone)</fullName>
        <ecNumber evidence="1">1.3.5.2</ecNumber>
    </recommendedName>
    <alternativeName>
        <fullName evidence="1">DHOdehase</fullName>
        <shortName evidence="1">DHOD</shortName>
        <shortName evidence="1">DHODase</shortName>
    </alternativeName>
    <alternativeName>
        <fullName evidence="1">Dihydroorotate oxidase</fullName>
    </alternativeName>
</protein>
<gene>
    <name evidence="1" type="primary">pyrD</name>
    <name type="ordered locus">APP7_0835</name>
</gene>
<dbReference type="EC" id="1.3.5.2" evidence="1"/>
<dbReference type="EMBL" id="CP001091">
    <property type="protein sequence ID" value="ACE61487.1"/>
    <property type="molecule type" value="Genomic_DNA"/>
</dbReference>
<dbReference type="RefSeq" id="WP_012478435.1">
    <property type="nucleotide sequence ID" value="NC_010939.1"/>
</dbReference>
<dbReference type="SMR" id="B3H1B5"/>
<dbReference type="KEGG" id="apa:APP7_0835"/>
<dbReference type="HOGENOM" id="CLU_013640_2_0_6"/>
<dbReference type="UniPathway" id="UPA00070">
    <property type="reaction ID" value="UER00946"/>
</dbReference>
<dbReference type="Proteomes" id="UP000001226">
    <property type="component" value="Chromosome"/>
</dbReference>
<dbReference type="GO" id="GO:0005737">
    <property type="term" value="C:cytoplasm"/>
    <property type="evidence" value="ECO:0007669"/>
    <property type="project" value="InterPro"/>
</dbReference>
<dbReference type="GO" id="GO:0005886">
    <property type="term" value="C:plasma membrane"/>
    <property type="evidence" value="ECO:0007669"/>
    <property type="project" value="UniProtKB-SubCell"/>
</dbReference>
<dbReference type="GO" id="GO:0106430">
    <property type="term" value="F:dihydroorotate dehydrogenase (quinone) activity"/>
    <property type="evidence" value="ECO:0007669"/>
    <property type="project" value="UniProtKB-EC"/>
</dbReference>
<dbReference type="GO" id="GO:0006207">
    <property type="term" value="P:'de novo' pyrimidine nucleobase biosynthetic process"/>
    <property type="evidence" value="ECO:0007669"/>
    <property type="project" value="InterPro"/>
</dbReference>
<dbReference type="GO" id="GO:0044205">
    <property type="term" value="P:'de novo' UMP biosynthetic process"/>
    <property type="evidence" value="ECO:0007669"/>
    <property type="project" value="UniProtKB-UniRule"/>
</dbReference>
<dbReference type="CDD" id="cd04738">
    <property type="entry name" value="DHOD_2_like"/>
    <property type="match status" value="1"/>
</dbReference>
<dbReference type="FunFam" id="3.20.20.70:FF:000028">
    <property type="entry name" value="Dihydroorotate dehydrogenase (quinone)"/>
    <property type="match status" value="1"/>
</dbReference>
<dbReference type="Gene3D" id="3.20.20.70">
    <property type="entry name" value="Aldolase class I"/>
    <property type="match status" value="1"/>
</dbReference>
<dbReference type="HAMAP" id="MF_00225">
    <property type="entry name" value="DHO_dh_type2"/>
    <property type="match status" value="1"/>
</dbReference>
<dbReference type="InterPro" id="IPR013785">
    <property type="entry name" value="Aldolase_TIM"/>
</dbReference>
<dbReference type="InterPro" id="IPR050074">
    <property type="entry name" value="DHO_dehydrogenase"/>
</dbReference>
<dbReference type="InterPro" id="IPR012135">
    <property type="entry name" value="Dihydroorotate_DH_1_2"/>
</dbReference>
<dbReference type="InterPro" id="IPR005719">
    <property type="entry name" value="Dihydroorotate_DH_2"/>
</dbReference>
<dbReference type="InterPro" id="IPR005720">
    <property type="entry name" value="Dihydroorotate_DH_cat"/>
</dbReference>
<dbReference type="InterPro" id="IPR001295">
    <property type="entry name" value="Dihydroorotate_DH_CS"/>
</dbReference>
<dbReference type="NCBIfam" id="NF003644">
    <property type="entry name" value="PRK05286.1-1"/>
    <property type="match status" value="1"/>
</dbReference>
<dbReference type="NCBIfam" id="NF003645">
    <property type="entry name" value="PRK05286.1-2"/>
    <property type="match status" value="1"/>
</dbReference>
<dbReference type="NCBIfam" id="NF003646">
    <property type="entry name" value="PRK05286.1-4"/>
    <property type="match status" value="1"/>
</dbReference>
<dbReference type="NCBIfam" id="NF003652">
    <property type="entry name" value="PRK05286.2-5"/>
    <property type="match status" value="1"/>
</dbReference>
<dbReference type="NCBIfam" id="TIGR01036">
    <property type="entry name" value="pyrD_sub2"/>
    <property type="match status" value="1"/>
</dbReference>
<dbReference type="PANTHER" id="PTHR48109:SF4">
    <property type="entry name" value="DIHYDROOROTATE DEHYDROGENASE (QUINONE), MITOCHONDRIAL"/>
    <property type="match status" value="1"/>
</dbReference>
<dbReference type="PANTHER" id="PTHR48109">
    <property type="entry name" value="DIHYDROOROTATE DEHYDROGENASE (QUINONE), MITOCHONDRIAL-RELATED"/>
    <property type="match status" value="1"/>
</dbReference>
<dbReference type="Pfam" id="PF01180">
    <property type="entry name" value="DHO_dh"/>
    <property type="match status" value="1"/>
</dbReference>
<dbReference type="PIRSF" id="PIRSF000164">
    <property type="entry name" value="DHO_oxidase"/>
    <property type="match status" value="1"/>
</dbReference>
<dbReference type="SUPFAM" id="SSF51395">
    <property type="entry name" value="FMN-linked oxidoreductases"/>
    <property type="match status" value="1"/>
</dbReference>
<dbReference type="PROSITE" id="PS00911">
    <property type="entry name" value="DHODEHASE_1"/>
    <property type="match status" value="1"/>
</dbReference>
<reference key="1">
    <citation type="submission" date="2008-06" db="EMBL/GenBank/DDBJ databases">
        <title>Genome and proteome analysis of A. pleuropneumoniae serotype 7.</title>
        <authorList>
            <person name="Linke B."/>
            <person name="Buettner F."/>
            <person name="Martinez-Arias R."/>
            <person name="Goesmann A."/>
            <person name="Baltes N."/>
            <person name="Tegetmeyer H."/>
            <person name="Singh M."/>
            <person name="Gerlach G.F."/>
        </authorList>
    </citation>
    <scope>NUCLEOTIDE SEQUENCE [LARGE SCALE GENOMIC DNA]</scope>
    <source>
        <strain>AP76</strain>
    </source>
</reference>
<comment type="function">
    <text evidence="1">Catalyzes the conversion of dihydroorotate to orotate with quinone as electron acceptor.</text>
</comment>
<comment type="catalytic activity">
    <reaction evidence="1">
        <text>(S)-dihydroorotate + a quinone = orotate + a quinol</text>
        <dbReference type="Rhea" id="RHEA:30187"/>
        <dbReference type="ChEBI" id="CHEBI:24646"/>
        <dbReference type="ChEBI" id="CHEBI:30839"/>
        <dbReference type="ChEBI" id="CHEBI:30864"/>
        <dbReference type="ChEBI" id="CHEBI:132124"/>
        <dbReference type="EC" id="1.3.5.2"/>
    </reaction>
</comment>
<comment type="cofactor">
    <cofactor evidence="1">
        <name>FMN</name>
        <dbReference type="ChEBI" id="CHEBI:58210"/>
    </cofactor>
    <text evidence="1">Binds 1 FMN per subunit.</text>
</comment>
<comment type="pathway">
    <text evidence="1">Pyrimidine metabolism; UMP biosynthesis via de novo pathway; orotate from (S)-dihydroorotate (quinone route): step 1/1.</text>
</comment>
<comment type="subunit">
    <text evidence="1">Monomer.</text>
</comment>
<comment type="subcellular location">
    <subcellularLocation>
        <location evidence="1">Cell membrane</location>
        <topology evidence="1">Peripheral membrane protein</topology>
    </subcellularLocation>
</comment>
<comment type="similarity">
    <text evidence="1">Belongs to the dihydroorotate dehydrogenase family. Type 2 subfamily.</text>
</comment>
<sequence>MYSLIRKCLFSMDAETAHNFSIQALKLAGKLPINVLPMPLNPVEVMGLQFKNPIGLAAGADKNGEAIDGFGKLGFGFIEVGTVTPVAQDGNPKPRQFRILEAEGIINRNGFNNLGVDVLVENVKKAKYDGIIGINIGKNAVTPIERALDDYQICLRKVYEHADYITVNISSPNTKNLRTLQYGEALDDLLRSLKSEQESLSQKFNRYKPLVLKIAPDLTDEEIASVADGLIRHKIDGVIAGNTTLSRDPVVGLKNAEQQGGLSGKPLNTLSTRLISTLAEELNGTLPIIGSGGIHSVASGQEKIDAGASLLQVYSAMIYQGLALIQNLAKHIQVR</sequence>
<proteinExistence type="inferred from homology"/>
<feature type="chain" id="PRO_1000100244" description="Dihydroorotate dehydrogenase (quinone)">
    <location>
        <begin position="1"/>
        <end position="335"/>
    </location>
</feature>
<feature type="active site" description="Nucleophile" evidence="1">
    <location>
        <position position="171"/>
    </location>
</feature>
<feature type="binding site" evidence="1">
    <location>
        <begin position="58"/>
        <end position="62"/>
    </location>
    <ligand>
        <name>FMN</name>
        <dbReference type="ChEBI" id="CHEBI:58210"/>
    </ligand>
</feature>
<feature type="binding site" evidence="1">
    <location>
        <position position="62"/>
    </location>
    <ligand>
        <name>substrate</name>
    </ligand>
</feature>
<feature type="binding site" evidence="1">
    <location>
        <position position="82"/>
    </location>
    <ligand>
        <name>FMN</name>
        <dbReference type="ChEBI" id="CHEBI:58210"/>
    </ligand>
</feature>
<feature type="binding site" evidence="1">
    <location>
        <begin position="107"/>
        <end position="111"/>
    </location>
    <ligand>
        <name>substrate</name>
    </ligand>
</feature>
<feature type="binding site" evidence="1">
    <location>
        <position position="135"/>
    </location>
    <ligand>
        <name>FMN</name>
        <dbReference type="ChEBI" id="CHEBI:58210"/>
    </ligand>
</feature>
<feature type="binding site" evidence="1">
    <location>
        <position position="168"/>
    </location>
    <ligand>
        <name>FMN</name>
        <dbReference type="ChEBI" id="CHEBI:58210"/>
    </ligand>
</feature>
<feature type="binding site" evidence="1">
    <location>
        <position position="168"/>
    </location>
    <ligand>
        <name>substrate</name>
    </ligand>
</feature>
<feature type="binding site" evidence="1">
    <location>
        <position position="173"/>
    </location>
    <ligand>
        <name>substrate</name>
    </ligand>
</feature>
<feature type="binding site" evidence="1">
    <location>
        <position position="213"/>
    </location>
    <ligand>
        <name>FMN</name>
        <dbReference type="ChEBI" id="CHEBI:58210"/>
    </ligand>
</feature>
<feature type="binding site" evidence="1">
    <location>
        <position position="241"/>
    </location>
    <ligand>
        <name>FMN</name>
        <dbReference type="ChEBI" id="CHEBI:58210"/>
    </ligand>
</feature>
<feature type="binding site" evidence="1">
    <location>
        <begin position="242"/>
        <end position="243"/>
    </location>
    <ligand>
        <name>substrate</name>
    </ligand>
</feature>
<feature type="binding site" evidence="1">
    <location>
        <position position="264"/>
    </location>
    <ligand>
        <name>FMN</name>
        <dbReference type="ChEBI" id="CHEBI:58210"/>
    </ligand>
</feature>
<feature type="binding site" evidence="1">
    <location>
        <position position="293"/>
    </location>
    <ligand>
        <name>FMN</name>
        <dbReference type="ChEBI" id="CHEBI:58210"/>
    </ligand>
</feature>
<feature type="binding site" evidence="1">
    <location>
        <begin position="314"/>
        <end position="315"/>
    </location>
    <ligand>
        <name>FMN</name>
        <dbReference type="ChEBI" id="CHEBI:58210"/>
    </ligand>
</feature>
<keyword id="KW-1003">Cell membrane</keyword>
<keyword id="KW-0285">Flavoprotein</keyword>
<keyword id="KW-0288">FMN</keyword>
<keyword id="KW-0472">Membrane</keyword>
<keyword id="KW-0560">Oxidoreductase</keyword>
<keyword id="KW-0665">Pyrimidine biosynthesis</keyword>
<name>PYRD_ACTP7</name>